<feature type="chain" id="PRO_0000221889" description="Packaging protein 1">
    <location>
        <begin position="1"/>
        <end position="502"/>
    </location>
</feature>
<feature type="region of interest" description="Disordered" evidence="2">
    <location>
        <begin position="99"/>
        <end position="122"/>
    </location>
</feature>
<feature type="region of interest" description="DNA-binding" evidence="1">
    <location>
        <begin position="495"/>
        <end position="502"/>
    </location>
</feature>
<feature type="binding site" evidence="1">
    <location>
        <begin position="226"/>
        <end position="233"/>
    </location>
    <ligand>
        <name>ATP</name>
        <dbReference type="ChEBI" id="CHEBI:30616"/>
    </ligand>
</feature>
<dbReference type="EMBL" id="Y07760">
    <property type="protein sequence ID" value="CAA69056.1"/>
    <property type="molecule type" value="Genomic_DNA"/>
</dbReference>
<dbReference type="KEGG" id="vg:1488950"/>
<dbReference type="Proteomes" id="UP000126130">
    <property type="component" value="Segment"/>
</dbReference>
<dbReference type="GO" id="GO:0044196">
    <property type="term" value="C:host cell nucleolus"/>
    <property type="evidence" value="ECO:0007669"/>
    <property type="project" value="UniProtKB-SubCell"/>
</dbReference>
<dbReference type="GO" id="GO:0044095">
    <property type="term" value="C:host cell nucleoplasm"/>
    <property type="evidence" value="ECO:0007669"/>
    <property type="project" value="UniProtKB-SubCell"/>
</dbReference>
<dbReference type="GO" id="GO:0044423">
    <property type="term" value="C:virion component"/>
    <property type="evidence" value="ECO:0007669"/>
    <property type="project" value="UniProtKB-UniRule"/>
</dbReference>
<dbReference type="GO" id="GO:0005524">
    <property type="term" value="F:ATP binding"/>
    <property type="evidence" value="ECO:0007669"/>
    <property type="project" value="UniProtKB-UniRule"/>
</dbReference>
<dbReference type="GO" id="GO:0003677">
    <property type="term" value="F:DNA binding"/>
    <property type="evidence" value="ECO:0007669"/>
    <property type="project" value="UniProtKB-UniRule"/>
</dbReference>
<dbReference type="GO" id="GO:0006351">
    <property type="term" value="P:DNA-templated transcription"/>
    <property type="evidence" value="ECO:0007669"/>
    <property type="project" value="UniProtKB-UniRule"/>
</dbReference>
<dbReference type="GO" id="GO:0039708">
    <property type="term" value="P:nuclear capsid assembly"/>
    <property type="evidence" value="ECO:0007669"/>
    <property type="project" value="UniProtKB-UniRule"/>
</dbReference>
<dbReference type="GO" id="GO:0006355">
    <property type="term" value="P:regulation of DNA-templated transcription"/>
    <property type="evidence" value="ECO:0007669"/>
    <property type="project" value="UniProtKB-UniRule"/>
</dbReference>
<dbReference type="GO" id="GO:0098035">
    <property type="term" value="P:viral DNA genome packaging via site-specific sequence recognition"/>
    <property type="evidence" value="ECO:0007669"/>
    <property type="project" value="UniProtKB-UniRule"/>
</dbReference>
<dbReference type="GO" id="GO:0019076">
    <property type="term" value="P:viral release from host cell"/>
    <property type="evidence" value="ECO:0007669"/>
    <property type="project" value="UniProtKB-UniRule"/>
</dbReference>
<dbReference type="GO" id="GO:0019083">
    <property type="term" value="P:viral transcription"/>
    <property type="evidence" value="ECO:0007669"/>
    <property type="project" value="UniProtKB-UniRule"/>
</dbReference>
<dbReference type="HAMAP" id="MF_04057">
    <property type="entry name" value="ADV_PKG1"/>
    <property type="match status" value="1"/>
</dbReference>
<dbReference type="InterPro" id="IPR003389">
    <property type="entry name" value="Adeno_IVa2"/>
</dbReference>
<dbReference type="InterPro" id="IPR027417">
    <property type="entry name" value="P-loop_NTPase"/>
</dbReference>
<dbReference type="Pfam" id="PF02456">
    <property type="entry name" value="Adeno_IVa2"/>
    <property type="match status" value="1"/>
</dbReference>
<dbReference type="SUPFAM" id="SSF52540">
    <property type="entry name" value="P-loop containing nucleoside triphosphate hydrolases"/>
    <property type="match status" value="1"/>
</dbReference>
<protein>
    <recommendedName>
        <fullName evidence="1">Packaging protein 1</fullName>
    </recommendedName>
    <alternativeName>
        <fullName evidence="1">Packaging protein IVa2</fullName>
    </alternativeName>
</protein>
<evidence type="ECO:0000255" key="1">
    <source>
        <dbReference type="HAMAP-Rule" id="MF_04057"/>
    </source>
</evidence>
<evidence type="ECO:0000256" key="2">
    <source>
        <dbReference type="SAM" id="MobiDB-lite"/>
    </source>
</evidence>
<accession>Q96680</accession>
<organismHost>
    <name type="scientific">Canis lupus familiaris</name>
    <name type="common">Dog</name>
    <name type="synonym">Canis familiaris</name>
    <dbReference type="NCBI Taxonomy" id="9615"/>
</organismHost>
<organism>
    <name type="scientific">Canine adenovirus serotype 1 (strain RI261)</name>
    <name type="common">CAdV-1</name>
    <name type="synonym">Canine adenovirus 1 (strain RI261)</name>
    <dbReference type="NCBI Taxonomy" id="69151"/>
    <lineage>
        <taxon>Viruses</taxon>
        <taxon>Varidnaviria</taxon>
        <taxon>Bamfordvirae</taxon>
        <taxon>Preplasmiviricota</taxon>
        <taxon>Tectiliviricetes</taxon>
        <taxon>Rowavirales</taxon>
        <taxon>Adenoviridae</taxon>
        <taxon>Mastadenovirus</taxon>
        <taxon>Canine mastadenovirus A</taxon>
    </lineage>
</organism>
<reference key="1">
    <citation type="journal article" date="1997" name="J. Gen. Virol.">
        <title>Complete DNA sequence of canine adenovirus type 1.</title>
        <authorList>
            <person name="Morrison M.D."/>
            <person name="Onions D.E."/>
            <person name="Nicolson L."/>
        </authorList>
    </citation>
    <scope>NUCLEOTIDE SEQUENCE [LARGE SCALE GENOMIC DNA]</scope>
</reference>
<comment type="function">
    <text evidence="1">Component of the packaging machinery which encapsidates the viral DNA into preformed capsids and transcriptional activator of the viral major late promoter (MLP). Binds, along with packaging proteins 2 and 3, to the specific packaging sequence on the left end of viral genomic DNA and displays ATPase activity thereby providing the power stroke of the packaging machinery. The activity of packaging protein IVa2 is stimulated by protein 33K which acts as a terminase. May be the protein that pumps DNA into the capsid powered by ATP hydrolysis. Specifically binds to the 5'-CG-3' nucleotides of the repeats making up the packaging sequence. Component of the DEF-A and DEF-B transcription factors that bind downstream elements of the major late promoter (MLP), and stimulate transcription from the MLP after initiation of viral DNA replication. DEF-A is a heterodimer packaging proteins 1 and 2 and DEF-B is a homodimer of packaging protein 1.</text>
</comment>
<comment type="subunit">
    <text evidence="1">Homodimer. Part of a genome packaging complex composed of packaging proteins 1, 2 and 3; this complex specifically binds to the packaging sequence on the left end of viral genomic DNA and performs packaging of the viral genome. Interacts with protein 33K.</text>
</comment>
<comment type="subcellular location">
    <subcellularLocation>
        <location evidence="1">Virion</location>
    </subcellularLocation>
    <subcellularLocation>
        <location evidence="1">Host nucleus</location>
        <location evidence="1">Host nucleoplasm</location>
    </subcellularLocation>
    <subcellularLocation>
        <location evidence="1">Host nucleus</location>
        <location evidence="1">Host nucleolus</location>
    </subcellularLocation>
    <text evidence="1">Located at a unique vertex of the capsid. Present in about 6-8 copies per virion.</text>
</comment>
<comment type="induction">
    <text evidence="1">Expressed in the intermediate phase of the viral replicative cycle.</text>
</comment>
<comment type="similarity">
    <text evidence="1">Belongs to the adenoviridae packaging protein 1 family.</text>
</comment>
<gene>
    <name evidence="1" type="primary">IVa2</name>
</gene>
<sequence length="502" mass="56819">MWGGCIQFRISVPGAKIICFKGHHMSRMSIRGQGQVTGKRSCHLHPLLRCAKGLLLCRPAAGLRHLQNQQNEPSQDPHQCADSCPALHSDRNHLNKEAEAMEGQNPTCSRHESAYPIQSQVSKSKKQRNYVDGAAVDDLKNLWDRLQTLQQSLTEMPYAEGLKPLKNFTSFEELLSMGGDSLLNDLLDIQDSITQCCIRASKYLNKEGNCTSLNYYKQPFIAAVYGPTGCGKSQLLRNLMSAQLIVPTPETVFFITPQVDMIPPQEIAAWETQICEGNFLAGPENTVVPQSGSIMPRFIQMSYAQLTKDENYDVTSPNNIFANAASKGPIAIVMDECMEDLGGNRGIAKFFHAFPSKLLDRFPKCTGYSVIVVLHNMNPRRDQGGNIANLKIQAKVHMISPKVHPSQLNRFINIYTKGQPTAISLLLKDIFNYHRLNTNFDWIVYNTEPIDNCMHWMYLSPQEGLIPMYLNIQGKLYQALERIHRTLTDRQRWTRYYHSKKK</sequence>
<proteinExistence type="inferred from homology"/>
<name>PKG1_ADECR</name>
<keyword id="KW-0010">Activator</keyword>
<keyword id="KW-0067">ATP-binding</keyword>
<keyword id="KW-0238">DNA-binding</keyword>
<keyword id="KW-1048">Host nucleus</keyword>
<keyword id="KW-0547">Nucleotide-binding</keyword>
<keyword id="KW-0597">Phosphoprotein</keyword>
<keyword id="KW-0804">Transcription</keyword>
<keyword id="KW-0805">Transcription regulation</keyword>
<keyword id="KW-0231">Viral genome packaging</keyword>
<keyword id="KW-1188">Viral release from host cell</keyword>
<keyword id="KW-0946">Virion</keyword>